<name>YAJO_ECOLI</name>
<keyword id="KW-0560">Oxidoreductase</keyword>
<keyword id="KW-1185">Reference proteome</keyword>
<sequence length="324" mass="36420">MQYNPLGKTDLRVSRLCLGCMTFGEPDRGNHAWTLPEESSRPIIKRALEGGINFFDTANSYSDGSSEEIVGRALRDFARREDVVVATKVFHRVGDLPEGLSRAQILRSIDDSLRRLGMDYVDILQIHRWDYNTPIEETLEALNDVVKAGKARYIGASSMHASQFAQALELQKQHGWAQFVSMQDHYNLIYREEEREMLPLCYQEGVAVIPWSPLARGRLTRPWGETTARLVSDEVGKNLYKESDENDAQIAERLTGVSEELGATRAQVALAWLLSKPGIAAPIIGTSREEQLDELLNAVDITLKPEQIAELETPYKPHPVVGFK</sequence>
<evidence type="ECO:0000250" key="1">
    <source>
        <dbReference type="UniProtKB" id="Q8CG76"/>
    </source>
</evidence>
<evidence type="ECO:0000269" key="2">
    <source>
    </source>
</evidence>
<evidence type="ECO:0000269" key="3">
    <source>
    </source>
</evidence>
<evidence type="ECO:0000305" key="4"/>
<comment type="function">
    <text evidence="3">Catalyzes the conversion of ribulose 5-phosphate (Ru5P) to 1-deoxy-D-xylulose 5-phosphate (DXP), providing a direct route from pentoses to terpenes. May play a role in biosynthesis of DXP under conditions of thiamine starvation.</text>
</comment>
<comment type="catalytic activity">
    <reaction evidence="3">
        <text>D-ribulose 5-phosphate + AH2 = 1-deoxy-D-xylulose 5-phosphate + A + H2O</text>
        <dbReference type="Rhea" id="RHEA:56944"/>
        <dbReference type="ChEBI" id="CHEBI:13193"/>
        <dbReference type="ChEBI" id="CHEBI:15377"/>
        <dbReference type="ChEBI" id="CHEBI:17499"/>
        <dbReference type="ChEBI" id="CHEBI:57792"/>
        <dbReference type="ChEBI" id="CHEBI:58121"/>
    </reaction>
</comment>
<comment type="activity regulation">
    <text evidence="3">NADH, NADPH or ATP do not increase activity.</text>
</comment>
<comment type="miscellaneous">
    <text evidence="2 3">Overexpression supports cell viability in the absence of the essential dxs-encoded 1-deoxy-D-xylulose-5-phosphate synthase (PubMed:25326299). Overexpression confers resistance to the 4-amino-2-methyl 5-hydroxymethylpyrimidine (HMP) analogs bacimethrin and 4-amino-2-trifluoromethyl 5-hydroxymethylpyrimidine (CF(3)-HMP) (PubMed:15292217).</text>
</comment>
<comment type="similarity">
    <text evidence="4">Belongs to the aldo/keto reductase family. Aldo/keto reductase 2 subfamily.</text>
</comment>
<comment type="sequence caution" evidence="4">
    <conflict type="erroneous initiation">
        <sequence resource="EMBL-CDS" id="AAB40175"/>
    </conflict>
    <text>Extended N-terminus.</text>
</comment>
<protein>
    <recommendedName>
        <fullName evidence="4">1-deoxyxylulose-5-phosphate synthase YajO</fullName>
        <ecNumber evidence="3">1.1.-.-</ecNumber>
    </recommendedName>
</protein>
<accession>P77735</accession>
<accession>Q2MC07</accession>
<reference key="1">
    <citation type="submission" date="1997-01" db="EMBL/GenBank/DDBJ databases">
        <title>Sequence of minutes 4-25 of Escherichia coli.</title>
        <authorList>
            <person name="Chung E."/>
            <person name="Allen E."/>
            <person name="Araujo R."/>
            <person name="Aparicio A.M."/>
            <person name="Davis K."/>
            <person name="Duncan M."/>
            <person name="Federspiel N."/>
            <person name="Hyman R."/>
            <person name="Kalman S."/>
            <person name="Komp C."/>
            <person name="Kurdi O."/>
            <person name="Lew H."/>
            <person name="Lin D."/>
            <person name="Namath A."/>
            <person name="Oefner P."/>
            <person name="Roberts D."/>
            <person name="Schramm S."/>
            <person name="Davis R.W."/>
        </authorList>
    </citation>
    <scope>NUCLEOTIDE SEQUENCE [LARGE SCALE GENOMIC DNA]</scope>
    <source>
        <strain>K12 / MG1655 / ATCC 47076</strain>
    </source>
</reference>
<reference key="2">
    <citation type="journal article" date="1997" name="Science">
        <title>The complete genome sequence of Escherichia coli K-12.</title>
        <authorList>
            <person name="Blattner F.R."/>
            <person name="Plunkett G. III"/>
            <person name="Bloch C.A."/>
            <person name="Perna N.T."/>
            <person name="Burland V."/>
            <person name="Riley M."/>
            <person name="Collado-Vides J."/>
            <person name="Glasner J.D."/>
            <person name="Rode C.K."/>
            <person name="Mayhew G.F."/>
            <person name="Gregor J."/>
            <person name="Davis N.W."/>
            <person name="Kirkpatrick H.A."/>
            <person name="Goeden M.A."/>
            <person name="Rose D.J."/>
            <person name="Mau B."/>
            <person name="Shao Y."/>
        </authorList>
    </citation>
    <scope>NUCLEOTIDE SEQUENCE [LARGE SCALE GENOMIC DNA]</scope>
    <source>
        <strain>K12 / MG1655 / ATCC 47076</strain>
    </source>
</reference>
<reference key="3">
    <citation type="journal article" date="2006" name="Mol. Syst. Biol.">
        <title>Highly accurate genome sequences of Escherichia coli K-12 strains MG1655 and W3110.</title>
        <authorList>
            <person name="Hayashi K."/>
            <person name="Morooka N."/>
            <person name="Yamamoto Y."/>
            <person name="Fujita K."/>
            <person name="Isono K."/>
            <person name="Choi S."/>
            <person name="Ohtsubo E."/>
            <person name="Baba T."/>
            <person name="Wanner B.L."/>
            <person name="Mori H."/>
            <person name="Horiuchi T."/>
        </authorList>
    </citation>
    <scope>NUCLEOTIDE SEQUENCE [LARGE SCALE GENOMIC DNA]</scope>
    <source>
        <strain>K12 / W3110 / ATCC 27325 / DSM 5911</strain>
    </source>
</reference>
<reference key="4">
    <citation type="journal article" date="2004" name="J. Biol. Chem.">
        <title>A genetic screen for the identification of thiamin metabolic genes.</title>
        <authorList>
            <person name="Lawhorn B.G."/>
            <person name="Gerdes S.Y."/>
            <person name="Begley T.P."/>
        </authorList>
    </citation>
    <scope>OVEREXPRESSION</scope>
    <source>
        <strain>K12 / MG1655 / ATCC 47076</strain>
    </source>
</reference>
<reference key="5">
    <citation type="journal article" date="2015" name="Appl. Environ. Microbiol.">
        <title>Enhancing terpene yield from sugars via novel routes to 1-deoxy-d-xylulose 5-phosphate.</title>
        <authorList>
            <person name="Kirby J."/>
            <person name="Nishimoto M."/>
            <person name="Chow R.W."/>
            <person name="Baidoo E.E."/>
            <person name="Wang G."/>
            <person name="Martin J."/>
            <person name="Schackwitz W."/>
            <person name="Chan R."/>
            <person name="Fortman J.L."/>
            <person name="Keasling J.D."/>
        </authorList>
    </citation>
    <scope>FUNCTION</scope>
    <scope>CATALYTIC ACTIVITY</scope>
    <scope>ACTIVITY REGULATION</scope>
    <scope>OVEREXPRESSION</scope>
    <source>
        <strain>K12 / MG1655 / ATCC 47076</strain>
    </source>
</reference>
<proteinExistence type="evidence at protein level"/>
<feature type="chain" id="PRO_0000070392" description="1-deoxyxylulose-5-phosphate synthase YajO">
    <location>
        <begin position="1"/>
        <end position="324"/>
    </location>
</feature>
<feature type="active site" description="Proton donor" evidence="1">
    <location>
        <position position="61"/>
    </location>
</feature>
<dbReference type="EC" id="1.1.-.-" evidence="3"/>
<dbReference type="EMBL" id="U82664">
    <property type="protein sequence ID" value="AAB40175.1"/>
    <property type="status" value="ALT_INIT"/>
    <property type="molecule type" value="Genomic_DNA"/>
</dbReference>
<dbReference type="EMBL" id="U00096">
    <property type="protein sequence ID" value="AAC73522.2"/>
    <property type="molecule type" value="Genomic_DNA"/>
</dbReference>
<dbReference type="EMBL" id="AP009048">
    <property type="protein sequence ID" value="BAE76199.1"/>
    <property type="molecule type" value="Genomic_DNA"/>
</dbReference>
<dbReference type="PIR" id="C64771">
    <property type="entry name" value="C64771"/>
</dbReference>
<dbReference type="RefSeq" id="NP_414953.2">
    <property type="nucleotide sequence ID" value="NC_000913.3"/>
</dbReference>
<dbReference type="RefSeq" id="WP_001199800.1">
    <property type="nucleotide sequence ID" value="NZ_SSZK01000009.1"/>
</dbReference>
<dbReference type="SMR" id="P77735"/>
<dbReference type="BioGRID" id="4259835">
    <property type="interactions" value="118"/>
</dbReference>
<dbReference type="DIP" id="DIP-11291N"/>
<dbReference type="FunCoup" id="P77735">
    <property type="interactions" value="724"/>
</dbReference>
<dbReference type="IntAct" id="P77735">
    <property type="interactions" value="6"/>
</dbReference>
<dbReference type="STRING" id="511145.b0419"/>
<dbReference type="TCDB" id="8.A.5.1.6">
    <property type="family name" value="the voltage-gated k(+) channel Beta-subunit (kvBeta) family"/>
</dbReference>
<dbReference type="jPOST" id="P77735"/>
<dbReference type="PaxDb" id="511145-b0419"/>
<dbReference type="EnsemblBacteria" id="AAC73522">
    <property type="protein sequence ID" value="AAC73522"/>
    <property type="gene ID" value="b0419"/>
</dbReference>
<dbReference type="GeneID" id="75170437"/>
<dbReference type="GeneID" id="946903"/>
<dbReference type="KEGG" id="ecj:JW0409"/>
<dbReference type="KEGG" id="eco:b0419"/>
<dbReference type="KEGG" id="ecoc:C3026_02045"/>
<dbReference type="PATRIC" id="fig|1411691.4.peg.1858"/>
<dbReference type="EchoBASE" id="EB3377"/>
<dbReference type="eggNOG" id="COG0667">
    <property type="taxonomic scope" value="Bacteria"/>
</dbReference>
<dbReference type="HOGENOM" id="CLU_023205_2_0_6"/>
<dbReference type="InParanoid" id="P77735"/>
<dbReference type="OMA" id="FNRMRPG"/>
<dbReference type="OrthoDB" id="9772407at2"/>
<dbReference type="PhylomeDB" id="P77735"/>
<dbReference type="BioCyc" id="EcoCyc:G6236-MONOMER"/>
<dbReference type="BioCyc" id="MetaCyc:G6236-MONOMER"/>
<dbReference type="BRENDA" id="2.2.1.7">
    <property type="organism ID" value="2026"/>
</dbReference>
<dbReference type="PRO" id="PR:P77735"/>
<dbReference type="Proteomes" id="UP000000625">
    <property type="component" value="Chromosome"/>
</dbReference>
<dbReference type="GO" id="GO:0005829">
    <property type="term" value="C:cytosol"/>
    <property type="evidence" value="ECO:0000314"/>
    <property type="project" value="EcoCyc"/>
</dbReference>
<dbReference type="GO" id="GO:0016491">
    <property type="term" value="F:oxidoreductase activity"/>
    <property type="evidence" value="ECO:0007669"/>
    <property type="project" value="UniProtKB-KW"/>
</dbReference>
<dbReference type="GO" id="GO:1902767">
    <property type="term" value="P:isoprenoid biosynthetic process via mevalonate"/>
    <property type="evidence" value="ECO:0000269"/>
    <property type="project" value="EcoCyc"/>
</dbReference>
<dbReference type="GO" id="GO:0006772">
    <property type="term" value="P:thiamine metabolic process"/>
    <property type="evidence" value="ECO:0000269"/>
    <property type="project" value="EcoliWiki"/>
</dbReference>
<dbReference type="CDD" id="cd19079">
    <property type="entry name" value="AKR_EcYajO-like"/>
    <property type="match status" value="1"/>
</dbReference>
<dbReference type="FunFam" id="3.20.20.100:FF:000004">
    <property type="entry name" value="Oxidoreductase, aldo/keto reductase"/>
    <property type="match status" value="1"/>
</dbReference>
<dbReference type="Gene3D" id="3.20.20.100">
    <property type="entry name" value="NADP-dependent oxidoreductase domain"/>
    <property type="match status" value="1"/>
</dbReference>
<dbReference type="InterPro" id="IPR020471">
    <property type="entry name" value="AKR"/>
</dbReference>
<dbReference type="InterPro" id="IPR050523">
    <property type="entry name" value="AKR_Detox_Biosynth"/>
</dbReference>
<dbReference type="InterPro" id="IPR023210">
    <property type="entry name" value="NADP_OxRdtase_dom"/>
</dbReference>
<dbReference type="InterPro" id="IPR036812">
    <property type="entry name" value="NADP_OxRdtase_dom_sf"/>
</dbReference>
<dbReference type="PANTHER" id="PTHR43364:SF4">
    <property type="entry name" value="NAD(P)-LINKED OXIDOREDUCTASE SUPERFAMILY PROTEIN"/>
    <property type="match status" value="1"/>
</dbReference>
<dbReference type="PANTHER" id="PTHR43364">
    <property type="entry name" value="NADH-SPECIFIC METHYLGLYOXAL REDUCTASE-RELATED"/>
    <property type="match status" value="1"/>
</dbReference>
<dbReference type="Pfam" id="PF00248">
    <property type="entry name" value="Aldo_ket_red"/>
    <property type="match status" value="1"/>
</dbReference>
<dbReference type="PRINTS" id="PR00069">
    <property type="entry name" value="ALDKETRDTASE"/>
</dbReference>
<dbReference type="SUPFAM" id="SSF51430">
    <property type="entry name" value="NAD(P)-linked oxidoreductase"/>
    <property type="match status" value="1"/>
</dbReference>
<organism>
    <name type="scientific">Escherichia coli (strain K12)</name>
    <dbReference type="NCBI Taxonomy" id="83333"/>
    <lineage>
        <taxon>Bacteria</taxon>
        <taxon>Pseudomonadati</taxon>
        <taxon>Pseudomonadota</taxon>
        <taxon>Gammaproteobacteria</taxon>
        <taxon>Enterobacterales</taxon>
        <taxon>Enterobacteriaceae</taxon>
        <taxon>Escherichia</taxon>
    </lineage>
</organism>
<gene>
    <name type="primary">yajO</name>
    <name type="ordered locus">b0419</name>
    <name type="ordered locus">JW0409</name>
</gene>